<gene>
    <name type="primary">SF3A2</name>
    <name type="synonym">SAP62</name>
</gene>
<proteinExistence type="evidence at protein level"/>
<sequence length="464" mass="49256">MDFQHRPGGKTGSGGVASSSESNRDRRERLRQLALETIDINKDPYFMKNHLGSYECKLCLTLHNNEGSYLAHTQGKKHQTNLARRAAKEAKEAPAQPAPEKVKVEVKKFVKIGRPGYKVTKQRDSEMGQQSLLFQIDYPEIAEGIMPRHRFMSAYEQRIEPPDRRWQYLLMAAEPYETIAFKVPSREIDKAEGKFWTHWNRETKQFFLQFHFKMEKPPAPPSLPAGPPGVKRPPPPLMNGLPPRPPLPESLPPPPPGGLPLPPMPPTGPAPSGPPGPPQLPPPAPGVHPPAPVVHPPASGVHPPAPGVHPPAPGVHPPAPGVHPPTSGVHPPAPGVHPPAPGVHPPAPGVHPPAPGVHPPAPGVHPPPSAGVHPQAPGVHPAAPAVHPQAPGVHPPAPGMHPQAPGVHPQPPGVHPSAPGVHPQPPGVHPSNPGVHPPTPMPPMLRPPLPSEGPGNIPPPPPTN</sequence>
<comment type="function">
    <text evidence="4 5 8 9 10 11 12">Component of the 17S U2 SnRNP complex of the spliceosome, a large ribonucleoprotein complex that removes introns from transcribed pre-mRNAs (PubMed:10882114, PubMed:11533230, PubMed:32494006, PubMed:34822310). The 17S U2 SnRNP complex (1) directly participates in early spliceosome assembly and (2) mediates recognition of the intron branch site during pre-mRNA splicing by promoting the selection of the pre-mRNA branch-site adenosine, the nucleophile for the first step of splicing (PubMed:10882114, PubMed:11533230, PubMed:32494006, PubMed:34822310). Within the 17S U2 SnRNP complex, SF3A2 is part of the SF3A subcomplex that contributes to the assembly of the 17S U2 snRNP, and the subsequent assembly of the pre-spliceosome 'E' complex and the pre-catalytic spliceosome 'A' complex (PubMed:10882114, PubMed:11533230). Involved in pre-mRNA splicing as a component of pre-catalytic spliceosome 'B' complexes, including the Bact complex (PubMed:29360106, PubMed:29361316, PubMed:30315277). Interacts directly with the duplex formed by U2 snRNA and the intron (PubMed:29360106).</text>
</comment>
<comment type="subunit">
    <text evidence="4 5 6 7 8 9 10 11 12 13 14">Component of the 17S U2 SnRNP complex, a ribonucleoprotein complex that contains small nuclear RNA (snRNA) U2 and a number of specific proteins (PubMed:21349847, PubMed:32494006, PubMed:34822310, PubMed:36797247). Part of the SF3A subcomplex of the 17S U2 SnRNP complex which is composed of three subunits; SF3A3/SAP61, SF3A2/SAP62 and SF3A1/SAP114 (PubMed:10882114, PubMed:11533230, PubMed:21349847). SF3A associates with the splicing factor SF3B and a 12S RNA unit to form the mature 17S U2 small nuclear ribonucleoprotein complex (17S U2 snRNP) (PubMed:10882114, PubMed:11533230). Identified in the spliceosome 'E' complex, a precursor of the spliceosome 'A' complex (PubMed:10882114). Identified in the spliceosome 'A' and 'B' complexes (PubMed:10882114, PubMed:29360106, PubMed:29361316, PubMed:30315277). Identified in the spliceosome 'C' complex (PubMed:11991638). Interacts with HTATSF1 (PubMed:9710584).</text>
</comment>
<comment type="interaction">
    <interactant intactId="EBI-2462271">
        <id>Q15428</id>
    </interactant>
    <interactant intactId="EBI-396258">
        <id>Q9UKV3</id>
        <label>ACIN1</label>
    </interactant>
    <organismsDiffer>false</organismsDiffer>
    <experiments>2</experiments>
</comment>
<comment type="interaction">
    <interactant intactId="EBI-2462271">
        <id>Q15428</id>
    </interactant>
    <interactant intactId="EBI-12092171">
        <id>Q12797-6</id>
        <label>ASPH</label>
    </interactant>
    <organismsDiffer>false</organismsDiffer>
    <experiments>3</experiments>
</comment>
<comment type="interaction">
    <interactant intactId="EBI-2462271">
        <id>Q15428</id>
    </interactant>
    <interactant intactId="EBI-9092016">
        <id>Q9UQB8-6</id>
        <label>BAIAP2</label>
    </interactant>
    <organismsDiffer>false</organismsDiffer>
    <experiments>3</experiments>
</comment>
<comment type="interaction">
    <interactant intactId="EBI-2462271">
        <id>Q15428</id>
    </interactant>
    <interactant intactId="EBI-954079">
        <id>Q8NDZ0</id>
        <label>BEND2</label>
    </interactant>
    <organismsDiffer>false</organismsDiffer>
    <experiments>3</experiments>
</comment>
<comment type="interaction">
    <interactant intactId="EBI-2462271">
        <id>Q15428</id>
    </interactant>
    <interactant intactId="EBI-374880">
        <id>Q99459</id>
        <label>CDC5L</label>
    </interactant>
    <organismsDiffer>false</organismsDiffer>
    <experiments>3</experiments>
</comment>
<comment type="interaction">
    <interactant intactId="EBI-2462271">
        <id>Q15428</id>
    </interactant>
    <interactant intactId="EBI-540096">
        <id>Q9BUQ8</id>
        <label>DDX23</label>
    </interactant>
    <organismsDiffer>false</organismsDiffer>
    <experiments>2</experiments>
</comment>
<comment type="interaction">
    <interactant intactId="EBI-2462271">
        <id>Q15428</id>
    </interactant>
    <interactant intactId="EBI-722353">
        <id>Q86XP3</id>
        <label>DDX42</label>
    </interactant>
    <organismsDiffer>false</organismsDiffer>
    <experiments>2</experiments>
</comment>
<comment type="interaction">
    <interactant intactId="EBI-2462271">
        <id>Q15428</id>
    </interactant>
    <interactant intactId="EBI-1237044">
        <id>O43143</id>
        <label>DHX15</label>
    </interactant>
    <organismsDiffer>false</organismsDiffer>
    <experiments>2</experiments>
</comment>
<comment type="interaction">
    <interactant intactId="EBI-2462271">
        <id>Q15428</id>
    </interactant>
    <interactant intactId="EBI-1045911">
        <id>O75937</id>
        <label>DNAJC8</label>
    </interactant>
    <organismsDiffer>false</organismsDiffer>
    <experiments>2</experiments>
</comment>
<comment type="interaction">
    <interactant intactId="EBI-2462271">
        <id>Q15428</id>
    </interactant>
    <interactant intactId="EBI-357897">
        <id>Q15029</id>
        <label>EFTUD2</label>
    </interactant>
    <organismsDiffer>false</organismsDiffer>
    <experiments>2</experiments>
</comment>
<comment type="interaction">
    <interactant intactId="EBI-2462271">
        <id>Q15428</id>
    </interactant>
    <interactant intactId="EBI-401755">
        <id>P62993</id>
        <label>GRB2</label>
    </interactant>
    <organismsDiffer>false</organismsDiffer>
    <experiments>3</experiments>
</comment>
<comment type="interaction">
    <interactant intactId="EBI-2462271">
        <id>Q15428</id>
    </interactant>
    <interactant intactId="EBI-351896">
        <id>P11142</id>
        <label>HSPA8</label>
    </interactant>
    <organismsDiffer>false</organismsDiffer>
    <experiments>4</experiments>
</comment>
<comment type="interaction">
    <interactant intactId="EBI-2462271">
        <id>Q15428</id>
    </interactant>
    <interactant intactId="EBI-720468">
        <id>O43719</id>
        <label>HTATSF1</label>
    </interactant>
    <organismsDiffer>false</organismsDiffer>
    <experiments>2</experiments>
</comment>
<comment type="interaction">
    <interactant intactId="EBI-2462271">
        <id>Q15428</id>
    </interactant>
    <interactant intactId="EBI-1389411">
        <id>Q6MZP7</id>
        <label>LIN54</label>
    </interactant>
    <organismsDiffer>false</organismsDiffer>
    <experiments>3</experiments>
</comment>
<comment type="interaction">
    <interactant intactId="EBI-2462271">
        <id>Q15428</id>
    </interactant>
    <interactant intactId="EBI-2555085">
        <id>Q8IVT2</id>
        <label>MISP</label>
    </interactant>
    <organismsDiffer>false</organismsDiffer>
    <experiments>3</experiments>
</comment>
<comment type="interaction">
    <interactant intactId="EBI-2462271">
        <id>Q15428</id>
    </interactant>
    <interactant intactId="EBI-464743">
        <id>Q09161</id>
        <label>NCBP1</label>
    </interactant>
    <organismsDiffer>false</organismsDiffer>
    <experiments>2</experiments>
</comment>
<comment type="interaction">
    <interactant intactId="EBI-2462271">
        <id>Q15428</id>
    </interactant>
    <interactant intactId="EBI-713635">
        <id>O43639</id>
        <label>NCK2</label>
    </interactant>
    <organismsDiffer>false</organismsDiffer>
    <experiments>3</experiments>
</comment>
<comment type="interaction">
    <interactant intactId="EBI-2462271">
        <id>Q15428</id>
    </interactant>
    <interactant intactId="EBI-2555365">
        <id>Q7RTV0</id>
        <label>PHF5A</label>
    </interactant>
    <organismsDiffer>false</organismsDiffer>
    <experiments>4</experiments>
</comment>
<comment type="interaction">
    <interactant intactId="EBI-2462271">
        <id>Q15428</id>
    </interactant>
    <interactant intactId="EBI-1051504">
        <id>O43660</id>
        <label>PLRG1</label>
    </interactant>
    <organismsDiffer>false</organismsDiffer>
    <experiments>2</experiments>
</comment>
<comment type="interaction">
    <interactant intactId="EBI-2462271">
        <id>Q15428</id>
    </interactant>
    <interactant intactId="EBI-681904">
        <id>Q9H307</id>
        <label>PNN</label>
    </interactant>
    <organismsDiffer>false</organismsDiffer>
    <experiments>2</experiments>
</comment>
<comment type="interaction">
    <interactant intactId="EBI-2462271">
        <id>Q15428</id>
    </interactant>
    <interactant intactId="EBI-744322">
        <id>O43395</id>
        <label>PRPF3</label>
    </interactant>
    <organismsDiffer>false</organismsDiffer>
    <experiments>2</experiments>
</comment>
<comment type="interaction">
    <interactant intactId="EBI-2462271">
        <id>Q15428</id>
    </interactant>
    <interactant intactId="EBI-536755">
        <id>O94906</id>
        <label>PRPF6</label>
    </interactant>
    <organismsDiffer>false</organismsDiffer>
    <experiments>2</experiments>
</comment>
<comment type="interaction">
    <interactant intactId="EBI-2462271">
        <id>Q15428</id>
    </interactant>
    <interactant intactId="EBI-538479">
        <id>Q6P2Q9</id>
        <label>PRPF8</label>
    </interactant>
    <organismsDiffer>false</organismsDiffer>
    <experiments>2</experiments>
</comment>
<comment type="interaction">
    <interactant intactId="EBI-2462271">
        <id>Q15428</id>
    </interactant>
    <interactant intactId="EBI-740272">
        <id>Q96I25</id>
        <label>RBM17</label>
    </interactant>
    <organismsDiffer>false</organismsDiffer>
    <experiments>4</experiments>
</comment>
<comment type="interaction">
    <interactant intactId="EBI-2462271">
        <id>Q15428</id>
    </interactant>
    <interactant intactId="EBI-607761">
        <id>O43290</id>
        <label>SART1</label>
    </interactant>
    <organismsDiffer>false</organismsDiffer>
    <experiments>2</experiments>
</comment>
<comment type="interaction">
    <interactant intactId="EBI-2462271">
        <id>Q15428</id>
    </interactant>
    <interactant intactId="EBI-744603">
        <id>Q15637</id>
        <label>SF1</label>
    </interactant>
    <organismsDiffer>false</organismsDiffer>
    <experiments>2</experiments>
</comment>
<comment type="interaction">
    <interactant intactId="EBI-2462271">
        <id>Q15428</id>
    </interactant>
    <interactant intactId="EBI-1054743">
        <id>Q15459</id>
        <label>SF3A1</label>
    </interactant>
    <organismsDiffer>false</organismsDiffer>
    <experiments>6</experiments>
</comment>
<comment type="interaction">
    <interactant intactId="EBI-2462271">
        <id>Q15428</id>
    </interactant>
    <interactant intactId="EBI-1051880">
        <id>Q12874</id>
        <label>SF3A3</label>
    </interactant>
    <organismsDiffer>false</organismsDiffer>
    <experiments>2</experiments>
</comment>
<comment type="interaction">
    <interactant intactId="EBI-2462271">
        <id>Q15428</id>
    </interactant>
    <interactant intactId="EBI-876542">
        <id>O75533</id>
        <label>SF3B1</label>
    </interactant>
    <organismsDiffer>false</organismsDiffer>
    <experiments>3</experiments>
</comment>
<comment type="interaction">
    <interactant intactId="EBI-2462271">
        <id>Q15428</id>
    </interactant>
    <interactant intactId="EBI-749111">
        <id>Q13435</id>
        <label>SF3B2</label>
    </interactant>
    <organismsDiffer>false</organismsDiffer>
    <experiments>2</experiments>
</comment>
<comment type="interaction">
    <interactant intactId="EBI-2462271">
        <id>Q15428</id>
    </interactant>
    <interactant intactId="EBI-346977">
        <id>Q15393</id>
        <label>SF3B3</label>
    </interactant>
    <organismsDiffer>false</organismsDiffer>
    <experiments>2</experiments>
</comment>
<comment type="interaction">
    <interactant intactId="EBI-2462271">
        <id>Q15428</id>
    </interactant>
    <interactant intactId="EBI-348469">
        <id>Q15427</id>
        <label>SF3B4</label>
    </interactant>
    <organismsDiffer>false</organismsDiffer>
    <experiments>2</experiments>
</comment>
<comment type="interaction">
    <interactant intactId="EBI-2462271">
        <id>Q15428</id>
    </interactant>
    <interactant intactId="EBI-2555428">
        <id>Q9BWJ5</id>
        <label>SF3B5</label>
    </interactant>
    <organismsDiffer>false</organismsDiffer>
    <experiments>2</experiments>
</comment>
<comment type="interaction">
    <interactant intactId="EBI-2462271">
        <id>Q15428</id>
    </interactant>
    <interactant intactId="EBI-1046261">
        <id>Q9Y3B4</id>
        <label>SF3B6</label>
    </interactant>
    <organismsDiffer>false</organismsDiffer>
    <experiments>3</experiments>
</comment>
<comment type="interaction">
    <interactant intactId="EBI-2462271">
        <id>Q15428</id>
    </interactant>
    <interactant intactId="EBI-1052641">
        <id>O75940</id>
        <label>SMNDC1</label>
    </interactant>
    <organismsDiffer>false</organismsDiffer>
    <experiments>3</experiments>
</comment>
<comment type="interaction">
    <interactant intactId="EBI-2462271">
        <id>Q15428</id>
    </interactant>
    <interactant intactId="EBI-1045395">
        <id>O75643</id>
        <label>SNRNP200</label>
    </interactant>
    <organismsDiffer>false</organismsDiffer>
    <experiments>2</experiments>
</comment>
<comment type="interaction">
    <interactant intactId="EBI-2462271">
        <id>Q15428</id>
    </interactant>
    <interactant intactId="EBI-876439">
        <id>P09661</id>
        <label>SNRPA1</label>
    </interactant>
    <organismsDiffer>false</organismsDiffer>
    <experiments>6</experiments>
</comment>
<comment type="interaction">
    <interactant intactId="EBI-2462271">
        <id>Q15428</id>
    </interactant>
    <interactant intactId="EBI-372458">
        <id>P14678</id>
        <label>SNRPB</label>
    </interactant>
    <organismsDiffer>false</organismsDiffer>
    <experiments>3</experiments>
</comment>
<comment type="interaction">
    <interactant intactId="EBI-2462271">
        <id>Q15428</id>
    </interactant>
    <interactant intactId="EBI-1053651">
        <id>P08579</id>
        <label>SNRPB2</label>
    </interactant>
    <organismsDiffer>false</organismsDiffer>
    <experiments>7</experiments>
</comment>
<comment type="interaction">
    <interactant intactId="EBI-2462271">
        <id>Q15428</id>
    </interactant>
    <interactant intactId="EBI-766589">
        <id>P09234</id>
        <label>SNRPC</label>
    </interactant>
    <organismsDiffer>false</organismsDiffer>
    <experiments>2</experiments>
</comment>
<comment type="interaction">
    <interactant intactId="EBI-2462271">
        <id>Q15428</id>
    </interactant>
    <interactant intactId="EBI-372177">
        <id>P62314</id>
        <label>SNRPD1</label>
    </interactant>
    <organismsDiffer>false</organismsDiffer>
    <experiments>2</experiments>
</comment>
<comment type="interaction">
    <interactant intactId="EBI-2462271">
        <id>Q15428</id>
    </interactant>
    <interactant intactId="EBI-297993">
        <id>P62316</id>
        <label>SNRPD2</label>
    </interactant>
    <organismsDiffer>false</organismsDiffer>
    <experiments>2</experiments>
</comment>
<comment type="interaction">
    <interactant intactId="EBI-2462271">
        <id>Q15428</id>
    </interactant>
    <interactant intactId="EBI-372789">
        <id>P62318</id>
        <label>SNRPD3</label>
    </interactant>
    <organismsDiffer>false</organismsDiffer>
    <experiments>2</experiments>
</comment>
<comment type="interaction">
    <interactant intactId="EBI-2462271">
        <id>Q15428</id>
    </interactant>
    <interactant intactId="EBI-348082">
        <id>P62304</id>
        <label>SNRPE</label>
    </interactant>
    <organismsDiffer>false</organismsDiffer>
    <experiments>5</experiments>
</comment>
<comment type="interaction">
    <interactant intactId="EBI-2462271">
        <id>Q15428</id>
    </interactant>
    <interactant intactId="EBI-356900">
        <id>P62306</id>
        <label>SNRPF</label>
    </interactant>
    <organismsDiffer>false</organismsDiffer>
    <experiments>6</experiments>
</comment>
<comment type="interaction">
    <interactant intactId="EBI-2462271">
        <id>Q15428</id>
    </interactant>
    <interactant intactId="EBI-624585">
        <id>P62308</id>
        <label>SNRPG</label>
    </interactant>
    <organismsDiffer>false</organismsDiffer>
    <experiments>2</experiments>
</comment>
<comment type="interaction">
    <interactant intactId="EBI-2462271">
        <id>Q15428</id>
    </interactant>
    <interactant intactId="EBI-357061">
        <id>Q92734</id>
        <label>TFG</label>
    </interactant>
    <organismsDiffer>false</organismsDiffer>
    <experiments>3</experiments>
</comment>
<comment type="interaction">
    <interactant intactId="EBI-2462271">
        <id>Q15428</id>
    </interactant>
    <interactant intactId="EBI-725485">
        <id>P62995</id>
        <label>TRA2B</label>
    </interactant>
    <organismsDiffer>false</organismsDiffer>
    <experiments>2</experiments>
</comment>
<comment type="interaction">
    <interactant intactId="EBI-2462271">
        <id>Q15428</id>
    </interactant>
    <interactant intactId="EBI-6550597">
        <id>Q15642-2</id>
        <label>TRIP10</label>
    </interactant>
    <organismsDiffer>false</organismsDiffer>
    <experiments>3</experiments>
</comment>
<comment type="interaction">
    <interactant intactId="EBI-2462271">
        <id>Q15428</id>
    </interactant>
    <interactant intactId="EBI-11980193">
        <id>Q14119</id>
        <label>VEZF1</label>
    </interactant>
    <organismsDiffer>false</organismsDiffer>
    <experiments>3</experiments>
</comment>
<comment type="interaction">
    <interactant intactId="EBI-2462271">
        <id>Q15428</id>
    </interactant>
    <interactant intactId="EBI-515331">
        <id>P07947</id>
        <label>YES1</label>
    </interactant>
    <organismsDiffer>false</organismsDiffer>
    <experiments>3</experiments>
</comment>
<comment type="interaction">
    <interactant intactId="EBI-2462271">
        <id>Q15428</id>
    </interactant>
    <interactant intactId="EBI-765538">
        <id>P25490</id>
        <label>YY1</label>
    </interactant>
    <organismsDiffer>false</organismsDiffer>
    <experiments>5</experiments>
</comment>
<comment type="subcellular location">
    <subcellularLocation>
        <location evidence="2 4 7 8 9 10">Nucleus</location>
    </subcellularLocation>
</comment>
<comment type="similarity">
    <text evidence="18">Belongs to the SF3A2 family.</text>
</comment>
<organism>
    <name type="scientific">Homo sapiens</name>
    <name type="common">Human</name>
    <dbReference type="NCBI Taxonomy" id="9606"/>
    <lineage>
        <taxon>Eukaryota</taxon>
        <taxon>Metazoa</taxon>
        <taxon>Chordata</taxon>
        <taxon>Craniata</taxon>
        <taxon>Vertebrata</taxon>
        <taxon>Euteleostomi</taxon>
        <taxon>Mammalia</taxon>
        <taxon>Eutheria</taxon>
        <taxon>Euarchontoglires</taxon>
        <taxon>Primates</taxon>
        <taxon>Haplorrhini</taxon>
        <taxon>Catarrhini</taxon>
        <taxon>Hominidae</taxon>
        <taxon>Homo</taxon>
    </lineage>
</organism>
<keyword id="KW-0002">3D-structure</keyword>
<keyword id="KW-0007">Acetylation</keyword>
<keyword id="KW-0903">Direct protein sequencing</keyword>
<keyword id="KW-0479">Metal-binding</keyword>
<keyword id="KW-0507">mRNA processing</keyword>
<keyword id="KW-0508">mRNA splicing</keyword>
<keyword id="KW-0539">Nucleus</keyword>
<keyword id="KW-0597">Phosphoprotein</keyword>
<keyword id="KW-1267">Proteomics identification</keyword>
<keyword id="KW-1185">Reference proteome</keyword>
<keyword id="KW-0677">Repeat</keyword>
<keyword id="KW-0747">Spliceosome</keyword>
<keyword id="KW-0862">Zinc</keyword>
<keyword id="KW-0863">Zinc-finger</keyword>
<reference key="1">
    <citation type="journal article" date="1993" name="Science">
        <title>Correspondence between a mammalian spliceosome component and an essential yeast splicing factor.</title>
        <authorList>
            <person name="Bennett M."/>
            <person name="Reed R."/>
        </authorList>
    </citation>
    <scope>NUCLEOTIDE SEQUENCE [GENOMIC DNA]</scope>
</reference>
<reference key="2">
    <citation type="journal article" date="2004" name="Nat. Genet.">
        <title>Complete sequencing and characterization of 21,243 full-length human cDNAs.</title>
        <authorList>
            <person name="Ota T."/>
            <person name="Suzuki Y."/>
            <person name="Nishikawa T."/>
            <person name="Otsuki T."/>
            <person name="Sugiyama T."/>
            <person name="Irie R."/>
            <person name="Wakamatsu A."/>
            <person name="Hayashi K."/>
            <person name="Sato H."/>
            <person name="Nagai K."/>
            <person name="Kimura K."/>
            <person name="Makita H."/>
            <person name="Sekine M."/>
            <person name="Obayashi M."/>
            <person name="Nishi T."/>
            <person name="Shibahara T."/>
            <person name="Tanaka T."/>
            <person name="Ishii S."/>
            <person name="Yamamoto J."/>
            <person name="Saito K."/>
            <person name="Kawai Y."/>
            <person name="Isono Y."/>
            <person name="Nakamura Y."/>
            <person name="Nagahari K."/>
            <person name="Murakami K."/>
            <person name="Yasuda T."/>
            <person name="Iwayanagi T."/>
            <person name="Wagatsuma M."/>
            <person name="Shiratori A."/>
            <person name="Sudo H."/>
            <person name="Hosoiri T."/>
            <person name="Kaku Y."/>
            <person name="Kodaira H."/>
            <person name="Kondo H."/>
            <person name="Sugawara M."/>
            <person name="Takahashi M."/>
            <person name="Kanda K."/>
            <person name="Yokoi T."/>
            <person name="Furuya T."/>
            <person name="Kikkawa E."/>
            <person name="Omura Y."/>
            <person name="Abe K."/>
            <person name="Kamihara K."/>
            <person name="Katsuta N."/>
            <person name="Sato K."/>
            <person name="Tanikawa M."/>
            <person name="Yamazaki M."/>
            <person name="Ninomiya K."/>
            <person name="Ishibashi T."/>
            <person name="Yamashita H."/>
            <person name="Murakawa K."/>
            <person name="Fujimori K."/>
            <person name="Tanai H."/>
            <person name="Kimata M."/>
            <person name="Watanabe M."/>
            <person name="Hiraoka S."/>
            <person name="Chiba Y."/>
            <person name="Ishida S."/>
            <person name="Ono Y."/>
            <person name="Takiguchi S."/>
            <person name="Watanabe S."/>
            <person name="Yosida M."/>
            <person name="Hotuta T."/>
            <person name="Kusano J."/>
            <person name="Kanehori K."/>
            <person name="Takahashi-Fujii A."/>
            <person name="Hara H."/>
            <person name="Tanase T.-O."/>
            <person name="Nomura Y."/>
            <person name="Togiya S."/>
            <person name="Komai F."/>
            <person name="Hara R."/>
            <person name="Takeuchi K."/>
            <person name="Arita M."/>
            <person name="Imose N."/>
            <person name="Musashino K."/>
            <person name="Yuuki H."/>
            <person name="Oshima A."/>
            <person name="Sasaki N."/>
            <person name="Aotsuka S."/>
            <person name="Yoshikawa Y."/>
            <person name="Matsunawa H."/>
            <person name="Ichihara T."/>
            <person name="Shiohata N."/>
            <person name="Sano S."/>
            <person name="Moriya S."/>
            <person name="Momiyama H."/>
            <person name="Satoh N."/>
            <person name="Takami S."/>
            <person name="Terashima Y."/>
            <person name="Suzuki O."/>
            <person name="Nakagawa S."/>
            <person name="Senoh A."/>
            <person name="Mizoguchi H."/>
            <person name="Goto Y."/>
            <person name="Shimizu F."/>
            <person name="Wakebe H."/>
            <person name="Hishigaki H."/>
            <person name="Watanabe T."/>
            <person name="Sugiyama A."/>
            <person name="Takemoto M."/>
            <person name="Kawakami B."/>
            <person name="Yamazaki M."/>
            <person name="Watanabe K."/>
            <person name="Kumagai A."/>
            <person name="Itakura S."/>
            <person name="Fukuzumi Y."/>
            <person name="Fujimori Y."/>
            <person name="Komiyama M."/>
            <person name="Tashiro H."/>
            <person name="Tanigami A."/>
            <person name="Fujiwara T."/>
            <person name="Ono T."/>
            <person name="Yamada K."/>
            <person name="Fujii Y."/>
            <person name="Ozaki K."/>
            <person name="Hirao M."/>
            <person name="Ohmori Y."/>
            <person name="Kawabata A."/>
            <person name="Hikiji T."/>
            <person name="Kobatake N."/>
            <person name="Inagaki H."/>
            <person name="Ikema Y."/>
            <person name="Okamoto S."/>
            <person name="Okitani R."/>
            <person name="Kawakami T."/>
            <person name="Noguchi S."/>
            <person name="Itoh T."/>
            <person name="Shigeta K."/>
            <person name="Senba T."/>
            <person name="Matsumura K."/>
            <person name="Nakajima Y."/>
            <person name="Mizuno T."/>
            <person name="Morinaga M."/>
            <person name="Sasaki M."/>
            <person name="Togashi T."/>
            <person name="Oyama M."/>
            <person name="Hata H."/>
            <person name="Watanabe M."/>
            <person name="Komatsu T."/>
            <person name="Mizushima-Sugano J."/>
            <person name="Satoh T."/>
            <person name="Shirai Y."/>
            <person name="Takahashi Y."/>
            <person name="Nakagawa K."/>
            <person name="Okumura K."/>
            <person name="Nagase T."/>
            <person name="Nomura N."/>
            <person name="Kikuchi H."/>
            <person name="Masuho Y."/>
            <person name="Yamashita R."/>
            <person name="Nakai K."/>
            <person name="Yada T."/>
            <person name="Nakamura Y."/>
            <person name="Ohara O."/>
            <person name="Isogai T."/>
            <person name="Sugano S."/>
        </authorList>
    </citation>
    <scope>NUCLEOTIDE SEQUENCE [LARGE SCALE MRNA]</scope>
    <source>
        <tissue>Umbilical cord blood</tissue>
    </source>
</reference>
<reference key="3">
    <citation type="journal article" date="2004" name="Nature">
        <title>The DNA sequence and biology of human chromosome 19.</title>
        <authorList>
            <person name="Grimwood J."/>
            <person name="Gordon L.A."/>
            <person name="Olsen A.S."/>
            <person name="Terry A."/>
            <person name="Schmutz J."/>
            <person name="Lamerdin J.E."/>
            <person name="Hellsten U."/>
            <person name="Goodstein D."/>
            <person name="Couronne O."/>
            <person name="Tran-Gyamfi M."/>
            <person name="Aerts A."/>
            <person name="Altherr M."/>
            <person name="Ashworth L."/>
            <person name="Bajorek E."/>
            <person name="Black S."/>
            <person name="Branscomb E."/>
            <person name="Caenepeel S."/>
            <person name="Carrano A.V."/>
            <person name="Caoile C."/>
            <person name="Chan Y.M."/>
            <person name="Christensen M."/>
            <person name="Cleland C.A."/>
            <person name="Copeland A."/>
            <person name="Dalin E."/>
            <person name="Dehal P."/>
            <person name="Denys M."/>
            <person name="Detter J.C."/>
            <person name="Escobar J."/>
            <person name="Flowers D."/>
            <person name="Fotopulos D."/>
            <person name="Garcia C."/>
            <person name="Georgescu A.M."/>
            <person name="Glavina T."/>
            <person name="Gomez M."/>
            <person name="Gonzales E."/>
            <person name="Groza M."/>
            <person name="Hammon N."/>
            <person name="Hawkins T."/>
            <person name="Haydu L."/>
            <person name="Ho I."/>
            <person name="Huang W."/>
            <person name="Israni S."/>
            <person name="Jett J."/>
            <person name="Kadner K."/>
            <person name="Kimball H."/>
            <person name="Kobayashi A."/>
            <person name="Larionov V."/>
            <person name="Leem S.-H."/>
            <person name="Lopez F."/>
            <person name="Lou Y."/>
            <person name="Lowry S."/>
            <person name="Malfatti S."/>
            <person name="Martinez D."/>
            <person name="McCready P.M."/>
            <person name="Medina C."/>
            <person name="Morgan J."/>
            <person name="Nelson K."/>
            <person name="Nolan M."/>
            <person name="Ovcharenko I."/>
            <person name="Pitluck S."/>
            <person name="Pollard M."/>
            <person name="Popkie A.P."/>
            <person name="Predki P."/>
            <person name="Quan G."/>
            <person name="Ramirez L."/>
            <person name="Rash S."/>
            <person name="Retterer J."/>
            <person name="Rodriguez A."/>
            <person name="Rogers S."/>
            <person name="Salamov A."/>
            <person name="Salazar A."/>
            <person name="She X."/>
            <person name="Smith D."/>
            <person name="Slezak T."/>
            <person name="Solovyev V."/>
            <person name="Thayer N."/>
            <person name="Tice H."/>
            <person name="Tsai M."/>
            <person name="Ustaszewska A."/>
            <person name="Vo N."/>
            <person name="Wagner M."/>
            <person name="Wheeler J."/>
            <person name="Wu K."/>
            <person name="Xie G."/>
            <person name="Yang J."/>
            <person name="Dubchak I."/>
            <person name="Furey T.S."/>
            <person name="DeJong P."/>
            <person name="Dickson M."/>
            <person name="Gordon D."/>
            <person name="Eichler E.E."/>
            <person name="Pennacchio L.A."/>
            <person name="Richardson P."/>
            <person name="Stubbs L."/>
            <person name="Rokhsar D.S."/>
            <person name="Myers R.M."/>
            <person name="Rubin E.M."/>
            <person name="Lucas S.M."/>
        </authorList>
    </citation>
    <scope>NUCLEOTIDE SEQUENCE [LARGE SCALE GENOMIC DNA]</scope>
</reference>
<reference key="4">
    <citation type="submission" date="2005-09" db="EMBL/GenBank/DDBJ databases">
        <authorList>
            <person name="Mural R.J."/>
            <person name="Istrail S."/>
            <person name="Sutton G.G."/>
            <person name="Florea L."/>
            <person name="Halpern A.L."/>
            <person name="Mobarry C.M."/>
            <person name="Lippert R."/>
            <person name="Walenz B."/>
            <person name="Shatkay H."/>
            <person name="Dew I."/>
            <person name="Miller J.R."/>
            <person name="Flanigan M.J."/>
            <person name="Edwards N.J."/>
            <person name="Bolanos R."/>
            <person name="Fasulo D."/>
            <person name="Halldorsson B.V."/>
            <person name="Hannenhalli S."/>
            <person name="Turner R."/>
            <person name="Yooseph S."/>
            <person name="Lu F."/>
            <person name="Nusskern D.R."/>
            <person name="Shue B.C."/>
            <person name="Zheng X.H."/>
            <person name="Zhong F."/>
            <person name="Delcher A.L."/>
            <person name="Huson D.H."/>
            <person name="Kravitz S.A."/>
            <person name="Mouchard L."/>
            <person name="Reinert K."/>
            <person name="Remington K.A."/>
            <person name="Clark A.G."/>
            <person name="Waterman M.S."/>
            <person name="Eichler E.E."/>
            <person name="Adams M.D."/>
            <person name="Hunkapiller M.W."/>
            <person name="Myers E.W."/>
            <person name="Venter J.C."/>
        </authorList>
    </citation>
    <scope>NUCLEOTIDE SEQUENCE [LARGE SCALE GENOMIC DNA]</scope>
</reference>
<reference key="5">
    <citation type="journal article" date="2004" name="Genome Res.">
        <title>The status, quality, and expansion of the NIH full-length cDNA project: the Mammalian Gene Collection (MGC).</title>
        <authorList>
            <consortium name="The MGC Project Team"/>
        </authorList>
    </citation>
    <scope>NUCLEOTIDE SEQUENCE [LARGE SCALE MRNA]</scope>
    <source>
        <tissue>Lung</tissue>
        <tissue>Lymph</tissue>
    </source>
</reference>
<reference key="6">
    <citation type="submission" date="2008-12" db="UniProtKB">
        <authorList>
            <person name="Bienvenut W.V."/>
            <person name="Lilla S."/>
            <person name="von Kriegsheim A."/>
            <person name="Lempens A."/>
            <person name="Kolch W."/>
        </authorList>
    </citation>
    <scope>PROTEIN SEQUENCE OF 1-10; 151-158 AND 205-213</scope>
    <scope>ACETYLATION AT MET-1</scope>
    <scope>IDENTIFICATION BY MASS SPECTROMETRY</scope>
    <source>
        <tissue>Ovarian carcinoma</tissue>
    </source>
</reference>
<reference key="7">
    <citation type="journal article" date="1998" name="Mol. Cell. Biol.">
        <title>CUS2, a yeast homolog of human Tat-SF1, rescues function of misfolded U2 through an unusual RNA recognition motif.</title>
        <authorList>
            <person name="Yan D."/>
            <person name="Perriman R."/>
            <person name="Igel H."/>
            <person name="Howe K.J."/>
            <person name="Neville M."/>
            <person name="Ares M. Jr."/>
        </authorList>
    </citation>
    <scope>INTERACTION WITH HTATSF1</scope>
</reference>
<reference key="8">
    <citation type="journal article" date="2000" name="Mol. Cell">
        <title>Functional association of U2 snRNP with the ATP-independent spliceosomal complex E.</title>
        <authorList>
            <person name="Das R."/>
            <person name="Zhou Z."/>
            <person name="Reed R."/>
        </authorList>
    </citation>
    <scope>FUNCTION</scope>
    <scope>SUBCELLULAR LOCATION</scope>
    <scope>SUBUNIT</scope>
</reference>
<reference key="9">
    <citation type="journal article" date="2001" name="Mol. Cell. Biol.">
        <title>Domains in human splicing factors SF3a60 and SF3a66 required for binding to SF3a120, assembly of the 17S U2 snRNP, and prespliceosome formation.</title>
        <authorList>
            <person name="Nesic D."/>
            <person name="Kraemer A."/>
        </authorList>
    </citation>
    <scope>FUNCTION</scope>
    <scope>SUBUNIT</scope>
</reference>
<reference key="10">
    <citation type="journal article" date="2002" name="RNA">
        <title>Purification and characterization of native spliceosomes suitable for three-dimensional structural analysis.</title>
        <authorList>
            <person name="Jurica M.S."/>
            <person name="Licklider L.J."/>
            <person name="Gygi S.P."/>
            <person name="Grigorieff N."/>
            <person name="Moore M.J."/>
        </authorList>
    </citation>
    <scope>IDENTIFICATION BY MASS SPECTROMETRY</scope>
    <scope>IDENTIFICATION IN THE SPLICEOSOMAL C COMPLEX</scope>
</reference>
<reference key="11">
    <citation type="journal article" date="2011" name="BMC Syst. Biol.">
        <title>Initial characterization of the human central proteome.</title>
        <authorList>
            <person name="Burkard T.R."/>
            <person name="Planyavsky M."/>
            <person name="Kaupe I."/>
            <person name="Breitwieser F.P."/>
            <person name="Buerckstuemmer T."/>
            <person name="Bennett K.L."/>
            <person name="Superti-Furga G."/>
            <person name="Colinge J."/>
        </authorList>
    </citation>
    <scope>IDENTIFICATION BY MASS SPECTROMETRY [LARGE SCALE ANALYSIS]</scope>
</reference>
<reference key="12">
    <citation type="journal article" date="2011" name="J. Biol. Chem.">
        <title>Interaction domains and nuclear targeting signals in subunits of the U2 small nuclear ribonucleoprotein particle-associated splicing factor SF3a.</title>
        <authorList>
            <person name="Huang C.J."/>
            <person name="Ferfoglia F."/>
            <person name="Raleff F."/>
            <person name="Kraemer A."/>
        </authorList>
    </citation>
    <scope>SUBCELLULAR LOCATION</scope>
    <scope>SUBUNIT</scope>
</reference>
<reference key="13">
    <citation type="journal article" date="2013" name="J. Proteome Res.">
        <title>Toward a comprehensive characterization of a human cancer cell phosphoproteome.</title>
        <authorList>
            <person name="Zhou H."/>
            <person name="Di Palma S."/>
            <person name="Preisinger C."/>
            <person name="Peng M."/>
            <person name="Polat A.N."/>
            <person name="Heck A.J."/>
            <person name="Mohammed S."/>
        </authorList>
    </citation>
    <scope>PHOSPHORYLATION [LARGE SCALE ANALYSIS] AT SER-153</scope>
    <scope>IDENTIFICATION BY MASS SPECTROMETRY [LARGE SCALE ANALYSIS]</scope>
    <source>
        <tissue>Erythroleukemia</tissue>
    </source>
</reference>
<reference evidence="22" key="14">
    <citation type="journal article" date="2018" name="Cell">
        <title>Structure and Conformational Dynamics of the Human Spliceosomal Bact Complex.</title>
        <authorList>
            <person name="Haselbach D."/>
            <person name="Komarov I."/>
            <person name="Agafonov D.E."/>
            <person name="Hartmuth K."/>
            <person name="Graf B."/>
            <person name="Dybkov O."/>
            <person name="Urlaub H."/>
            <person name="Kastner B."/>
            <person name="Luhrmann R."/>
            <person name="Stark H."/>
        </authorList>
    </citation>
    <scope>STRUCTURE BY ELECTRON MICROSCOPY (16.00 ANGSTROMS)</scope>
    <scope>FUNCTION</scope>
    <scope>IDENTIFICATION BY MASS SPECTROMETRY</scope>
    <scope>SUBCELLULAR LOCATION</scope>
    <scope>SUBUNIT</scope>
</reference>
<reference evidence="19 20 21" key="15">
    <citation type="journal article" date="2018" name="Cell Res.">
        <title>Structure of the human activated spliceosome in three conformational states.</title>
        <authorList>
            <person name="Zhang X."/>
            <person name="Yan C."/>
            <person name="Zhan X."/>
            <person name="Li L."/>
            <person name="Lei J."/>
            <person name="Shi Y."/>
        </authorList>
    </citation>
    <scope>STRUCTURE BY ELECTRON MICROSCOPY (4.90 ANGSTROMS)</scope>
    <scope>FUNCTION</scope>
    <scope>SUBUNIT</scope>
    <scope>SUBCELLULAR LOCATION</scope>
</reference>
<reference key="16">
    <citation type="journal article" date="2018" name="Cell Res.">
        <title>Structures of the human pre-catalytic spliceosome and its precursor spliceosome.</title>
        <authorList>
            <person name="Zhan X."/>
            <person name="Yan C."/>
            <person name="Zhang X."/>
            <person name="Lei J."/>
            <person name="Shi Y."/>
        </authorList>
    </citation>
    <scope>STRUCTURE BY ELECTRON MICROSCOPY (3.80 ANGSTROMS)</scope>
    <scope>FUNCTION</scope>
    <scope>SUBUNIT</scope>
    <scope>SUBCELLULAR LOCATION</scope>
</reference>
<reference evidence="23" key="17">
    <citation type="journal article" date="2020" name="Nature">
        <title>Molecular architecture of the human 17S U2 snRNP.</title>
        <authorList>
            <person name="Zhang Z."/>
            <person name="Will C.L."/>
            <person name="Bertram K."/>
            <person name="Dybkov O."/>
            <person name="Hartmuth K."/>
            <person name="Agafonov D.E."/>
            <person name="Hofele R."/>
            <person name="Urlaub H."/>
            <person name="Kastner B."/>
            <person name="Luehrmann R."/>
            <person name="Stark H."/>
        </authorList>
    </citation>
    <scope>STRUCTURE BY ELECTRON MICROSCOPY (4.10 ANGSTROMS) IN COMPLEX WITH THE 17S U2 SNRNP COMPLEX</scope>
    <scope>FUNCTION</scope>
    <scope>IDENTIFICATION IN THE 17S U2 SNRNP COMPLEX</scope>
</reference>
<reference evidence="24 25" key="18">
    <citation type="journal article" date="2022" name="Science">
        <title>Structural basis of branch site recognition by the human spliceosome.</title>
        <authorList>
            <person name="Tholen J."/>
            <person name="Razew M."/>
            <person name="Weis F."/>
            <person name="Galej W.P."/>
        </authorList>
    </citation>
    <scope>STRUCTURE BY ELECTRON MICROSCOPY (2.30 ANGSTROMS) IN COMPLEX WITH THE 17S U2 SNRNP COMPLEX</scope>
    <scope>FUNCTION</scope>
    <scope>IDENTIFICATION IN THE 17S U2 SNRNP COMPLEX</scope>
</reference>
<reference evidence="26" key="19">
    <citation type="journal article" date="2023" name="Nat. Commun.">
        <title>Mechanisms of the RNA helicases DDX42 and DDX46 in human U2 snRNP assembly.</title>
        <authorList>
            <person name="Yang F."/>
            <person name="Bian T."/>
            <person name="Zhan X."/>
            <person name="Chen Z."/>
            <person name="Xing Z."/>
            <person name="Larsen N.A."/>
            <person name="Zhang X."/>
            <person name="Shi Y."/>
        </authorList>
    </citation>
    <scope>STRUCTURE BY ELECTRON MICROSCOPY (2.70 ANGSTROMS) IN COMPLEX WITH THE 17S U2 SNRNP COMPLEX</scope>
    <scope>IDENTIFICATION IN THE 17S U2 SNRNP COMPLEX</scope>
</reference>
<accession>Q15428</accession>
<accession>B2RBU1</accession>
<accession>D6W605</accession>
<accession>O75245</accession>
<evidence type="ECO:0000250" key="1">
    <source>
        <dbReference type="UniProtKB" id="Q62203"/>
    </source>
</evidence>
<evidence type="ECO:0000255" key="2">
    <source>
        <dbReference type="PROSITE-ProRule" id="PRU00130"/>
    </source>
</evidence>
<evidence type="ECO:0000256" key="3">
    <source>
        <dbReference type="SAM" id="MobiDB-lite"/>
    </source>
</evidence>
<evidence type="ECO:0000269" key="4">
    <source>
    </source>
</evidence>
<evidence type="ECO:0000269" key="5">
    <source>
    </source>
</evidence>
<evidence type="ECO:0000269" key="6">
    <source>
    </source>
</evidence>
<evidence type="ECO:0000269" key="7">
    <source>
    </source>
</evidence>
<evidence type="ECO:0000269" key="8">
    <source>
    </source>
</evidence>
<evidence type="ECO:0000269" key="9">
    <source>
    </source>
</evidence>
<evidence type="ECO:0000269" key="10">
    <source>
    </source>
</evidence>
<evidence type="ECO:0000269" key="11">
    <source>
    </source>
</evidence>
<evidence type="ECO:0000269" key="12">
    <source>
    </source>
</evidence>
<evidence type="ECO:0000269" key="13">
    <source>
    </source>
</evidence>
<evidence type="ECO:0000269" key="14">
    <source>
    </source>
</evidence>
<evidence type="ECO:0000269" key="15">
    <source ref="6"/>
</evidence>
<evidence type="ECO:0000303" key="16">
    <source>
    </source>
</evidence>
<evidence type="ECO:0000303" key="17">
    <source>
    </source>
</evidence>
<evidence type="ECO:0000305" key="18"/>
<evidence type="ECO:0007744" key="19">
    <source>
        <dbReference type="PDB" id="5Z56"/>
    </source>
</evidence>
<evidence type="ECO:0007744" key="20">
    <source>
        <dbReference type="PDB" id="5Z57"/>
    </source>
</evidence>
<evidence type="ECO:0007744" key="21">
    <source>
        <dbReference type="PDB" id="5Z58"/>
    </source>
</evidence>
<evidence type="ECO:0007744" key="22">
    <source>
        <dbReference type="PDB" id="6FF4"/>
    </source>
</evidence>
<evidence type="ECO:0007744" key="23">
    <source>
        <dbReference type="PDB" id="6Y5Q"/>
    </source>
</evidence>
<evidence type="ECO:0007744" key="24">
    <source>
        <dbReference type="PDB" id="7Q4O"/>
    </source>
</evidence>
<evidence type="ECO:0007744" key="25">
    <source>
        <dbReference type="PDB" id="7Q4P"/>
    </source>
</evidence>
<evidence type="ECO:0007744" key="26">
    <source>
        <dbReference type="PDB" id="8HK1"/>
    </source>
</evidence>
<evidence type="ECO:0007744" key="27">
    <source>
    </source>
</evidence>
<evidence type="ECO:0007829" key="28">
    <source>
        <dbReference type="PDB" id="6FF4"/>
    </source>
</evidence>
<evidence type="ECO:0007829" key="29">
    <source>
        <dbReference type="PDB" id="7EVO"/>
    </source>
</evidence>
<evidence type="ECO:0007829" key="30">
    <source>
        <dbReference type="PDB" id="7Q4O"/>
    </source>
</evidence>
<evidence type="ECO:0007829" key="31">
    <source>
        <dbReference type="PDB" id="7QTT"/>
    </source>
</evidence>
<dbReference type="EMBL" id="L21990">
    <property type="protein sequence ID" value="AAA60301.1"/>
    <property type="molecule type" value="Genomic_DNA"/>
</dbReference>
<dbReference type="EMBL" id="AK314815">
    <property type="protein sequence ID" value="BAG37338.1"/>
    <property type="molecule type" value="mRNA"/>
</dbReference>
<dbReference type="EMBL" id="AC005263">
    <property type="protein sequence ID" value="AAC25613.1"/>
    <property type="molecule type" value="Genomic_DNA"/>
</dbReference>
<dbReference type="EMBL" id="CH471139">
    <property type="protein sequence ID" value="EAW69398.1"/>
    <property type="molecule type" value="Genomic_DNA"/>
</dbReference>
<dbReference type="EMBL" id="CH471139">
    <property type="protein sequence ID" value="EAW69400.1"/>
    <property type="molecule type" value="Genomic_DNA"/>
</dbReference>
<dbReference type="EMBL" id="CH471139">
    <property type="protein sequence ID" value="EAW69401.1"/>
    <property type="molecule type" value="Genomic_DNA"/>
</dbReference>
<dbReference type="EMBL" id="CH471139">
    <property type="protein sequence ID" value="EAW69402.1"/>
    <property type="molecule type" value="Genomic_DNA"/>
</dbReference>
<dbReference type="EMBL" id="BC004434">
    <property type="protein sequence ID" value="AAH04434.1"/>
    <property type="molecule type" value="mRNA"/>
</dbReference>
<dbReference type="EMBL" id="BC009903">
    <property type="protein sequence ID" value="AAH09903.1"/>
    <property type="molecule type" value="mRNA"/>
</dbReference>
<dbReference type="CCDS" id="CCDS12084.1"/>
<dbReference type="PIR" id="A47655">
    <property type="entry name" value="A47655"/>
</dbReference>
<dbReference type="RefSeq" id="NP_009096.2">
    <property type="nucleotide sequence ID" value="NM_007165.4"/>
</dbReference>
<dbReference type="PDB" id="5Z56">
    <property type="method" value="EM"/>
    <property type="resolution" value="5.10 A"/>
    <property type="chains" value="v=1-464"/>
</dbReference>
<dbReference type="PDB" id="5Z57">
    <property type="method" value="EM"/>
    <property type="resolution" value="6.50 A"/>
    <property type="chains" value="u=88-369"/>
</dbReference>
<dbReference type="PDB" id="5Z58">
    <property type="method" value="EM"/>
    <property type="resolution" value="4.90 A"/>
    <property type="chains" value="u=88-369"/>
</dbReference>
<dbReference type="PDB" id="6AH0">
    <property type="method" value="EM"/>
    <property type="resolution" value="5.70 A"/>
    <property type="chains" value="v=1-464"/>
</dbReference>
<dbReference type="PDB" id="6AHD">
    <property type="method" value="EM"/>
    <property type="resolution" value="3.80 A"/>
    <property type="chains" value="v=1-464"/>
</dbReference>
<dbReference type="PDB" id="6FF4">
    <property type="method" value="EM"/>
    <property type="resolution" value="16.00 A"/>
    <property type="chains" value="7=1-464"/>
</dbReference>
<dbReference type="PDB" id="6FF7">
    <property type="method" value="EM"/>
    <property type="resolution" value="4.50 A"/>
    <property type="chains" value="7=1-464"/>
</dbReference>
<dbReference type="PDB" id="6QX9">
    <property type="method" value="EM"/>
    <property type="resolution" value="3.28 A"/>
    <property type="chains" value="A2=1-209"/>
</dbReference>
<dbReference type="PDB" id="6Y53">
    <property type="method" value="EM"/>
    <property type="resolution" value="7.10 A"/>
    <property type="chains" value="7=1-464"/>
</dbReference>
<dbReference type="PDB" id="6Y5Q">
    <property type="method" value="EM"/>
    <property type="resolution" value="7.10 A"/>
    <property type="chains" value="7=1-464"/>
</dbReference>
<dbReference type="PDB" id="7ABG">
    <property type="method" value="EM"/>
    <property type="resolution" value="7.80 A"/>
    <property type="chains" value="F=1-464"/>
</dbReference>
<dbReference type="PDB" id="7ABH">
    <property type="method" value="EM"/>
    <property type="resolution" value="4.50 A"/>
    <property type="chains" value="F=1-464"/>
</dbReference>
<dbReference type="PDB" id="7ABI">
    <property type="method" value="EM"/>
    <property type="resolution" value="8.00 A"/>
    <property type="chains" value="F=1-464"/>
</dbReference>
<dbReference type="PDB" id="7EVO">
    <property type="method" value="EM"/>
    <property type="resolution" value="2.50 A"/>
    <property type="chains" value="B=1-464"/>
</dbReference>
<dbReference type="PDB" id="7ONB">
    <property type="method" value="EM"/>
    <property type="resolution" value="3.10 A"/>
    <property type="chains" value="M=1-464"/>
</dbReference>
<dbReference type="PDB" id="7Q4O">
    <property type="method" value="EM"/>
    <property type="resolution" value="2.20 A"/>
    <property type="chains" value="1=1-464"/>
</dbReference>
<dbReference type="PDB" id="7Q4P">
    <property type="method" value="EM"/>
    <property type="resolution" value="2.20 A"/>
    <property type="chains" value="1=1-464"/>
</dbReference>
<dbReference type="PDB" id="7QTT">
    <property type="method" value="EM"/>
    <property type="resolution" value="3.10 A"/>
    <property type="chains" value="I=1-464"/>
</dbReference>
<dbReference type="PDB" id="7VPX">
    <property type="method" value="EM"/>
    <property type="resolution" value="3.00 A"/>
    <property type="chains" value="B=1-464"/>
</dbReference>
<dbReference type="PDB" id="8CH6">
    <property type="method" value="EM"/>
    <property type="resolution" value="5.90 A"/>
    <property type="chains" value="I=1-464"/>
</dbReference>
<dbReference type="PDB" id="8H6E">
    <property type="method" value="EM"/>
    <property type="resolution" value="3.20 A"/>
    <property type="chains" value="2E=1-464"/>
</dbReference>
<dbReference type="PDB" id="8H6J">
    <property type="method" value="EM"/>
    <property type="resolution" value="3.25 A"/>
    <property type="chains" value="2E=1-464"/>
</dbReference>
<dbReference type="PDB" id="8H6K">
    <property type="method" value="EM"/>
    <property type="resolution" value="2.70 A"/>
    <property type="chains" value="2E=1-464"/>
</dbReference>
<dbReference type="PDB" id="8H6L">
    <property type="method" value="EM"/>
    <property type="resolution" value="2.60 A"/>
    <property type="chains" value="2E=1-464"/>
</dbReference>
<dbReference type="PDB" id="8HK1">
    <property type="method" value="EM"/>
    <property type="resolution" value="2.70 A"/>
    <property type="chains" value="B=1-464"/>
</dbReference>
<dbReference type="PDB" id="8I0P">
    <property type="method" value="EM"/>
    <property type="resolution" value="3.40 A"/>
    <property type="chains" value="v=1-464"/>
</dbReference>
<dbReference type="PDB" id="8I0R">
    <property type="method" value="EM"/>
    <property type="resolution" value="3.00 A"/>
    <property type="chains" value="v=1-464"/>
</dbReference>
<dbReference type="PDB" id="8I0S">
    <property type="method" value="EM"/>
    <property type="resolution" value="4.20 A"/>
    <property type="chains" value="v=1-464"/>
</dbReference>
<dbReference type="PDB" id="8I0T">
    <property type="method" value="EM"/>
    <property type="resolution" value="3.00 A"/>
    <property type="chains" value="v=1-464"/>
</dbReference>
<dbReference type="PDB" id="8QO9">
    <property type="method" value="EM"/>
    <property type="resolution" value="5.29 A"/>
    <property type="chains" value="8/G=1-464"/>
</dbReference>
<dbReference type="PDB" id="8QXD">
    <property type="method" value="EM"/>
    <property type="resolution" value="9.60 A"/>
    <property type="chains" value="8=1-464"/>
</dbReference>
<dbReference type="PDB" id="8QZS">
    <property type="method" value="EM"/>
    <property type="resolution" value="4.10 A"/>
    <property type="chains" value="8=1-464"/>
</dbReference>
<dbReference type="PDB" id="8R08">
    <property type="method" value="EM"/>
    <property type="resolution" value="6.10 A"/>
    <property type="chains" value="8=1-464"/>
</dbReference>
<dbReference type="PDB" id="8R09">
    <property type="method" value="EM"/>
    <property type="resolution" value="4.30 A"/>
    <property type="chains" value="8=1-464"/>
</dbReference>
<dbReference type="PDB" id="8R0A">
    <property type="method" value="EM"/>
    <property type="resolution" value="5.80 A"/>
    <property type="chains" value="8=1-464"/>
</dbReference>
<dbReference type="PDB" id="8R0B">
    <property type="method" value="EM"/>
    <property type="resolution" value="4.40 A"/>
    <property type="chains" value="8=1-464"/>
</dbReference>
<dbReference type="PDB" id="8RM5">
    <property type="method" value="EM"/>
    <property type="resolution" value="6.90 A"/>
    <property type="chains" value="8=1-464"/>
</dbReference>
<dbReference type="PDBsum" id="5Z56"/>
<dbReference type="PDBsum" id="5Z57"/>
<dbReference type="PDBsum" id="5Z58"/>
<dbReference type="PDBsum" id="6AH0"/>
<dbReference type="PDBsum" id="6AHD"/>
<dbReference type="PDBsum" id="6FF4"/>
<dbReference type="PDBsum" id="6FF7"/>
<dbReference type="PDBsum" id="6QX9"/>
<dbReference type="PDBsum" id="6Y53"/>
<dbReference type="PDBsum" id="6Y5Q"/>
<dbReference type="PDBsum" id="7ABG"/>
<dbReference type="PDBsum" id="7ABH"/>
<dbReference type="PDBsum" id="7ABI"/>
<dbReference type="PDBsum" id="7EVO"/>
<dbReference type="PDBsum" id="7ONB"/>
<dbReference type="PDBsum" id="7Q4O"/>
<dbReference type="PDBsum" id="7Q4P"/>
<dbReference type="PDBsum" id="7QTT"/>
<dbReference type="PDBsum" id="7VPX"/>
<dbReference type="PDBsum" id="8CH6"/>
<dbReference type="PDBsum" id="8H6E"/>
<dbReference type="PDBsum" id="8H6J"/>
<dbReference type="PDBsum" id="8H6K"/>
<dbReference type="PDBsum" id="8H6L"/>
<dbReference type="PDBsum" id="8HK1"/>
<dbReference type="PDBsum" id="8I0P"/>
<dbReference type="PDBsum" id="8I0R"/>
<dbReference type="PDBsum" id="8I0S"/>
<dbReference type="PDBsum" id="8I0T"/>
<dbReference type="PDBsum" id="8QO9"/>
<dbReference type="PDBsum" id="8QXD"/>
<dbReference type="PDBsum" id="8QZS"/>
<dbReference type="PDBsum" id="8R08"/>
<dbReference type="PDBsum" id="8R09"/>
<dbReference type="PDBsum" id="8R0A"/>
<dbReference type="PDBsum" id="8R0B"/>
<dbReference type="PDBsum" id="8RM5"/>
<dbReference type="EMDB" id="EMD-10689"/>
<dbReference type="EMDB" id="EMD-11695"/>
<dbReference type="EMDB" id="EMD-11696"/>
<dbReference type="EMDB" id="EMD-11697"/>
<dbReference type="EMDB" id="EMD-12994"/>
<dbReference type="EMDB" id="EMD-13811"/>
<dbReference type="EMDB" id="EMD-13812"/>
<dbReference type="EMDB" id="EMD-14146"/>
<dbReference type="EMDB" id="EMD-16658"/>
<dbReference type="EMDB" id="EMD-18529"/>
<dbReference type="EMDB" id="EMD-18718"/>
<dbReference type="EMDB" id="EMD-18781"/>
<dbReference type="EMDB" id="EMD-18786"/>
<dbReference type="EMDB" id="EMD-18787"/>
<dbReference type="EMDB" id="EMD-18788"/>
<dbReference type="EMDB" id="EMD-18789"/>
<dbReference type="EMDB" id="EMD-19349"/>
<dbReference type="EMDB" id="EMD-31334"/>
<dbReference type="EMDB" id="EMD-32074"/>
<dbReference type="EMDB" id="EMD-34500"/>
<dbReference type="EMDB" id="EMD-34505"/>
<dbReference type="EMDB" id="EMD-34507"/>
<dbReference type="EMDB" id="EMD-34508"/>
<dbReference type="EMDB" id="EMD-34841"/>
<dbReference type="EMDB" id="EMD-35105"/>
<dbReference type="EMDB" id="EMD-35107"/>
<dbReference type="EMDB" id="EMD-35108"/>
<dbReference type="EMDB" id="EMD-35109"/>
<dbReference type="EMDB" id="EMD-4255"/>
<dbReference type="EMDB" id="EMD-4665"/>
<dbReference type="EMDB" id="EMD-6889"/>
<dbReference type="EMDB" id="EMD-6890"/>
<dbReference type="EMDB" id="EMD-6891"/>
<dbReference type="EMDB" id="EMD-9621"/>
<dbReference type="EMDB" id="EMD-9624"/>
<dbReference type="SMR" id="Q15428"/>
<dbReference type="BioGRID" id="113826">
    <property type="interactions" value="428"/>
</dbReference>
<dbReference type="ComplexPortal" id="CPX-2539">
    <property type="entry name" value="U2 small nuclear ribonucleoprotein complex"/>
</dbReference>
<dbReference type="ComplexPortal" id="CPX-2565">
    <property type="entry name" value="SF3A complex"/>
</dbReference>
<dbReference type="CORUM" id="Q15428"/>
<dbReference type="DIP" id="DIP-42521N"/>
<dbReference type="FunCoup" id="Q15428">
    <property type="interactions" value="1681"/>
</dbReference>
<dbReference type="IntAct" id="Q15428">
    <property type="interactions" value="179"/>
</dbReference>
<dbReference type="MINT" id="Q15428"/>
<dbReference type="STRING" id="9606.ENSP00000221494"/>
<dbReference type="DrugBank" id="DB09130">
    <property type="generic name" value="Copper"/>
</dbReference>
<dbReference type="MoonProt" id="Q15428"/>
<dbReference type="GlyGen" id="Q15428">
    <property type="glycosylation" value="2 sites, 1 O-linked glycan (2 sites)"/>
</dbReference>
<dbReference type="iPTMnet" id="Q15428"/>
<dbReference type="PhosphoSitePlus" id="Q15428"/>
<dbReference type="SwissPalm" id="Q15428"/>
<dbReference type="BioMuta" id="SF3A2"/>
<dbReference type="DMDM" id="20141793"/>
<dbReference type="jPOST" id="Q15428"/>
<dbReference type="MassIVE" id="Q15428"/>
<dbReference type="PaxDb" id="9606-ENSP00000221494"/>
<dbReference type="PeptideAtlas" id="Q15428"/>
<dbReference type="ProteomicsDB" id="60588"/>
<dbReference type="Pumba" id="Q15428"/>
<dbReference type="Antibodypedia" id="22956">
    <property type="antibodies" value="169 antibodies from 24 providers"/>
</dbReference>
<dbReference type="DNASU" id="8175"/>
<dbReference type="Ensembl" id="ENST00000221494.10">
    <property type="protein sequence ID" value="ENSP00000221494.3"/>
    <property type="gene ID" value="ENSG00000104897.10"/>
</dbReference>
<dbReference type="GeneID" id="8175"/>
<dbReference type="KEGG" id="hsa:8175"/>
<dbReference type="MANE-Select" id="ENST00000221494.10">
    <property type="protein sequence ID" value="ENSP00000221494.3"/>
    <property type="RefSeq nucleotide sequence ID" value="NM_007165.5"/>
    <property type="RefSeq protein sequence ID" value="NP_009096.2"/>
</dbReference>
<dbReference type="UCSC" id="uc002lvg.4">
    <property type="organism name" value="human"/>
</dbReference>
<dbReference type="AGR" id="HGNC:10766"/>
<dbReference type="CTD" id="8175"/>
<dbReference type="DisGeNET" id="8175"/>
<dbReference type="GeneCards" id="SF3A2"/>
<dbReference type="HGNC" id="HGNC:10766">
    <property type="gene designation" value="SF3A2"/>
</dbReference>
<dbReference type="HPA" id="ENSG00000104897">
    <property type="expression patterns" value="Low tissue specificity"/>
</dbReference>
<dbReference type="MIM" id="600796">
    <property type="type" value="gene"/>
</dbReference>
<dbReference type="neXtProt" id="NX_Q15428"/>
<dbReference type="OpenTargets" id="ENSG00000104897"/>
<dbReference type="PharmGKB" id="PA35684"/>
<dbReference type="VEuPathDB" id="HostDB:ENSG00000104897"/>
<dbReference type="eggNOG" id="KOG0227">
    <property type="taxonomic scope" value="Eukaryota"/>
</dbReference>
<dbReference type="GeneTree" id="ENSGT00720000108823"/>
<dbReference type="HOGENOM" id="CLU_050757_1_1_1"/>
<dbReference type="InParanoid" id="Q15428"/>
<dbReference type="OMA" id="MAPPHGM"/>
<dbReference type="OrthoDB" id="10250970at2759"/>
<dbReference type="PAN-GO" id="Q15428">
    <property type="GO annotations" value="4 GO annotations based on evolutionary models"/>
</dbReference>
<dbReference type="PhylomeDB" id="Q15428"/>
<dbReference type="TreeFam" id="TF314370"/>
<dbReference type="PathwayCommons" id="Q15428"/>
<dbReference type="Reactome" id="R-HSA-72163">
    <property type="pathway name" value="mRNA Splicing - Major Pathway"/>
</dbReference>
<dbReference type="SignaLink" id="Q15428"/>
<dbReference type="SIGNOR" id="Q15428"/>
<dbReference type="BioGRID-ORCS" id="8175">
    <property type="hits" value="831 hits in 1158 CRISPR screens"/>
</dbReference>
<dbReference type="CD-CODE" id="804901D1">
    <property type="entry name" value="Nuclear speckle"/>
</dbReference>
<dbReference type="ChiTaRS" id="SF3A2">
    <property type="organism name" value="human"/>
</dbReference>
<dbReference type="GeneWiki" id="SF3A2"/>
<dbReference type="GenomeRNAi" id="8175"/>
<dbReference type="Pharos" id="Q15428">
    <property type="development level" value="Tbio"/>
</dbReference>
<dbReference type="PRO" id="PR:Q15428"/>
<dbReference type="Proteomes" id="UP000005640">
    <property type="component" value="Chromosome 19"/>
</dbReference>
<dbReference type="RNAct" id="Q15428">
    <property type="molecule type" value="protein"/>
</dbReference>
<dbReference type="Bgee" id="ENSG00000104897">
    <property type="expression patterns" value="Expressed in left testis and 166 other cell types or tissues"/>
</dbReference>
<dbReference type="ExpressionAtlas" id="Q15428">
    <property type="expression patterns" value="baseline and differential"/>
</dbReference>
<dbReference type="GO" id="GO:0071013">
    <property type="term" value="C:catalytic step 2 spliceosome"/>
    <property type="evidence" value="ECO:0000314"/>
    <property type="project" value="UniProtKB"/>
</dbReference>
<dbReference type="GO" id="GO:0016607">
    <property type="term" value="C:nuclear speck"/>
    <property type="evidence" value="ECO:0007669"/>
    <property type="project" value="Ensembl"/>
</dbReference>
<dbReference type="GO" id="GO:0005654">
    <property type="term" value="C:nucleoplasm"/>
    <property type="evidence" value="ECO:0000314"/>
    <property type="project" value="HPA"/>
</dbReference>
<dbReference type="GO" id="GO:0005634">
    <property type="term" value="C:nucleus"/>
    <property type="evidence" value="ECO:0000314"/>
    <property type="project" value="UniProtKB"/>
</dbReference>
<dbReference type="GO" id="GO:0005681">
    <property type="term" value="C:spliceosomal complex"/>
    <property type="evidence" value="ECO:0000314"/>
    <property type="project" value="HGNC-UCL"/>
</dbReference>
<dbReference type="GO" id="GO:0005686">
    <property type="term" value="C:U2 snRNP"/>
    <property type="evidence" value="ECO:0000314"/>
    <property type="project" value="UniProtKB"/>
</dbReference>
<dbReference type="GO" id="GO:0071005">
    <property type="term" value="C:U2-type precatalytic spliceosome"/>
    <property type="evidence" value="ECO:0000314"/>
    <property type="project" value="UniProtKB"/>
</dbReference>
<dbReference type="GO" id="GO:0071004">
    <property type="term" value="C:U2-type prespliceosome"/>
    <property type="evidence" value="ECO:0000318"/>
    <property type="project" value="GO_Central"/>
</dbReference>
<dbReference type="GO" id="GO:0005684">
    <property type="term" value="C:U2-type spliceosomal complex"/>
    <property type="evidence" value="ECO:0000314"/>
    <property type="project" value="UniProtKB"/>
</dbReference>
<dbReference type="GO" id="GO:0003723">
    <property type="term" value="F:RNA binding"/>
    <property type="evidence" value="ECO:0007005"/>
    <property type="project" value="UniProtKB"/>
</dbReference>
<dbReference type="GO" id="GO:0008270">
    <property type="term" value="F:zinc ion binding"/>
    <property type="evidence" value="ECO:0007669"/>
    <property type="project" value="UniProtKB-KW"/>
</dbReference>
<dbReference type="GO" id="GO:0000389">
    <property type="term" value="P:mRNA 3'-splice site recognition"/>
    <property type="evidence" value="ECO:0000304"/>
    <property type="project" value="HGNC-UCL"/>
</dbReference>
<dbReference type="GO" id="GO:0006397">
    <property type="term" value="P:mRNA processing"/>
    <property type="evidence" value="ECO:0000315"/>
    <property type="project" value="HGNC-UCL"/>
</dbReference>
<dbReference type="GO" id="GO:0000398">
    <property type="term" value="P:mRNA splicing, via spliceosome"/>
    <property type="evidence" value="ECO:0000314"/>
    <property type="project" value="UniProtKB"/>
</dbReference>
<dbReference type="GO" id="GO:0010976">
    <property type="term" value="P:positive regulation of neuron projection development"/>
    <property type="evidence" value="ECO:0007669"/>
    <property type="project" value="Ensembl"/>
</dbReference>
<dbReference type="GO" id="GO:0000245">
    <property type="term" value="P:spliceosomal complex assembly"/>
    <property type="evidence" value="ECO:0000318"/>
    <property type="project" value="GO_Central"/>
</dbReference>
<dbReference type="GO" id="GO:1903241">
    <property type="term" value="P:U2-type prespliceosome assembly"/>
    <property type="evidence" value="ECO:0000314"/>
    <property type="project" value="UniProtKB"/>
</dbReference>
<dbReference type="FunFam" id="3.30.160.60:FF:001216">
    <property type="entry name" value="Splicing factor 3A subunit 2"/>
    <property type="match status" value="1"/>
</dbReference>
<dbReference type="FunFam" id="2.60.40.2690:FF:000001">
    <property type="entry name" value="Splicing factor 3a, subunit 2"/>
    <property type="match status" value="1"/>
</dbReference>
<dbReference type="Gene3D" id="2.60.40.2690">
    <property type="match status" value="1"/>
</dbReference>
<dbReference type="InterPro" id="IPR000690">
    <property type="entry name" value="Matrin/U1-C_Znf_C2H2"/>
</dbReference>
<dbReference type="InterPro" id="IPR003604">
    <property type="entry name" value="Matrin/U1-like-C_Znf_C2H2"/>
</dbReference>
<dbReference type="InterPro" id="IPR052092">
    <property type="entry name" value="SF3A2"/>
</dbReference>
<dbReference type="InterPro" id="IPR031781">
    <property type="entry name" value="SF3A2_dom"/>
</dbReference>
<dbReference type="InterPro" id="IPR036236">
    <property type="entry name" value="Znf_C2H2_sf"/>
</dbReference>
<dbReference type="InterPro" id="IPR013087">
    <property type="entry name" value="Znf_C2H2_type"/>
</dbReference>
<dbReference type="PANTHER" id="PTHR23205">
    <property type="entry name" value="SPLICING FACTOR 3A SUBUNIT 2"/>
    <property type="match status" value="1"/>
</dbReference>
<dbReference type="PANTHER" id="PTHR23205:SF0">
    <property type="entry name" value="SPLICING FACTOR 3A SUBUNIT 2"/>
    <property type="match status" value="1"/>
</dbReference>
<dbReference type="Pfam" id="PF16835">
    <property type="entry name" value="SF3A2"/>
    <property type="match status" value="1"/>
</dbReference>
<dbReference type="Pfam" id="PF12874">
    <property type="entry name" value="zf-met"/>
    <property type="match status" value="1"/>
</dbReference>
<dbReference type="SMART" id="SM01050">
    <property type="entry name" value="CactinC_cactus"/>
    <property type="match status" value="1"/>
</dbReference>
<dbReference type="SMART" id="SM00451">
    <property type="entry name" value="ZnF_U1"/>
    <property type="match status" value="1"/>
</dbReference>
<dbReference type="SUPFAM" id="SSF57667">
    <property type="entry name" value="beta-beta-alpha zinc fingers"/>
    <property type="match status" value="1"/>
</dbReference>
<dbReference type="PROSITE" id="PS50171">
    <property type="entry name" value="ZF_MATRIN"/>
    <property type="match status" value="1"/>
</dbReference>
<name>SF3A2_HUMAN</name>
<protein>
    <recommendedName>
        <fullName>Splicing factor 3A subunit 2</fullName>
    </recommendedName>
    <alternativeName>
        <fullName evidence="16 17">SF3a66</fullName>
    </alternativeName>
    <alternativeName>
        <fullName>Spliceosome-associated protein 62</fullName>
        <shortName>SAP 62</shortName>
    </alternativeName>
</protein>
<feature type="chain" id="PRO_0000174315" description="Splicing factor 3A subunit 2">
    <location>
        <begin position="1"/>
        <end position="464"/>
    </location>
</feature>
<feature type="zinc finger region" description="Matrin-type" evidence="2">
    <location>
        <begin position="54"/>
        <end position="84"/>
    </location>
</feature>
<feature type="region of interest" description="Disordered" evidence="3">
    <location>
        <begin position="1"/>
        <end position="27"/>
    </location>
</feature>
<feature type="region of interest" description="Disordered" evidence="3">
    <location>
        <begin position="217"/>
        <end position="464"/>
    </location>
</feature>
<feature type="compositionally biased region" description="Pro residues" evidence="3">
    <location>
        <begin position="217"/>
        <end position="295"/>
    </location>
</feature>
<feature type="compositionally biased region" description="Pro residues" evidence="3">
    <location>
        <begin position="303"/>
        <end position="323"/>
    </location>
</feature>
<feature type="compositionally biased region" description="Pro residues" evidence="3">
    <location>
        <begin position="331"/>
        <end position="369"/>
    </location>
</feature>
<feature type="compositionally biased region" description="Low complexity" evidence="3">
    <location>
        <begin position="370"/>
        <end position="392"/>
    </location>
</feature>
<feature type="compositionally biased region" description="Pro residues" evidence="3">
    <location>
        <begin position="435"/>
        <end position="464"/>
    </location>
</feature>
<feature type="modified residue" description="N-acetylmethionine" evidence="15">
    <location>
        <position position="1"/>
    </location>
</feature>
<feature type="modified residue" description="N6-acetyllysine" evidence="1">
    <location>
        <position position="10"/>
    </location>
</feature>
<feature type="modified residue" description="Phosphoserine" evidence="27">
    <location>
        <position position="153"/>
    </location>
</feature>
<feature type="sequence conflict" description="In Ref. 1; AAA60301." evidence="18" ref="1">
    <original>R</original>
    <variation>P</variation>
    <location>
        <position position="29"/>
    </location>
</feature>
<feature type="strand" evidence="28">
    <location>
        <begin position="3"/>
        <end position="6"/>
    </location>
</feature>
<feature type="helix" evidence="31">
    <location>
        <begin position="19"/>
        <end position="41"/>
    </location>
</feature>
<feature type="strand" evidence="30">
    <location>
        <begin position="45"/>
        <end position="48"/>
    </location>
</feature>
<feature type="strand" evidence="30">
    <location>
        <begin position="54"/>
        <end position="56"/>
    </location>
</feature>
<feature type="turn" evidence="30">
    <location>
        <begin position="57"/>
        <end position="60"/>
    </location>
</feature>
<feature type="strand" evidence="30">
    <location>
        <begin position="61"/>
        <end position="65"/>
    </location>
</feature>
<feature type="helix" evidence="30">
    <location>
        <begin position="66"/>
        <end position="73"/>
    </location>
</feature>
<feature type="helix" evidence="30">
    <location>
        <begin position="76"/>
        <end position="82"/>
    </location>
</feature>
<feature type="helix" evidence="29">
    <location>
        <begin position="105"/>
        <end position="108"/>
    </location>
</feature>
<feature type="strand" evidence="29">
    <location>
        <begin position="118"/>
        <end position="121"/>
    </location>
</feature>
<feature type="strand" evidence="29">
    <location>
        <begin position="134"/>
        <end position="137"/>
    </location>
</feature>
<feature type="strand" evidence="29">
    <location>
        <begin position="148"/>
        <end position="155"/>
    </location>
</feature>
<feature type="strand" evidence="29">
    <location>
        <begin position="167"/>
        <end position="172"/>
    </location>
</feature>
<feature type="strand" evidence="29">
    <location>
        <begin position="174"/>
        <end position="176"/>
    </location>
</feature>
<feature type="strand" evidence="29">
    <location>
        <begin position="179"/>
        <end position="183"/>
    </location>
</feature>
<feature type="turn" evidence="29">
    <location>
        <begin position="193"/>
        <end position="195"/>
    </location>
</feature>
<feature type="strand" evidence="29">
    <location>
        <begin position="196"/>
        <end position="200"/>
    </location>
</feature>
<feature type="turn" evidence="29">
    <location>
        <begin position="201"/>
        <end position="204"/>
    </location>
</feature>
<feature type="strand" evidence="29">
    <location>
        <begin position="205"/>
        <end position="208"/>
    </location>
</feature>